<organismHost>
    <name type="scientific">Escherichia coli</name>
    <dbReference type="NCBI Taxonomy" id="562"/>
</organismHost>
<name>Y12H_BPT4</name>
<protein>
    <recommendedName>
        <fullName>Uncharacterized 8.9 kDa protein in Gp30-rIII intergenic region</fullName>
    </recommendedName>
</protein>
<feature type="chain" id="PRO_0000165168" description="Uncharacterized 8.9 kDa protein in Gp30-rIII intergenic region">
    <location>
        <begin position="1"/>
        <end position="75"/>
    </location>
</feature>
<keyword id="KW-1185">Reference proteome</keyword>
<accession>P39497</accession>
<sequence length="75" mass="8946">MLNNNVVYLGYPGLPPNKLEGLMLELRTVGPSFGLEFRFQDTPRRGKNYTQMHILKQRFKTRAFVMHYKPRKEKF</sequence>
<gene>
    <name type="primary">y12H</name>
    <name type="synonym">30.3'</name>
</gene>
<dbReference type="EMBL" id="X53848">
    <property type="protein sequence ID" value="CAD27808.1"/>
    <property type="molecule type" value="Genomic_DNA"/>
</dbReference>
<dbReference type="EMBL" id="AF158101">
    <property type="protein sequence ID" value="AAD42444.1"/>
    <property type="molecule type" value="Genomic_DNA"/>
</dbReference>
<dbReference type="RefSeq" id="NP_049817.1">
    <property type="nucleotide sequence ID" value="NC_000866.4"/>
</dbReference>
<dbReference type="SMR" id="P39497"/>
<dbReference type="GeneID" id="1258625"/>
<dbReference type="KEGG" id="vg:1258625"/>
<dbReference type="OrthoDB" id="22923at10239"/>
<dbReference type="Proteomes" id="UP000009087">
    <property type="component" value="Segment"/>
</dbReference>
<dbReference type="InterPro" id="IPR020112">
    <property type="entry name" value="DUF2883"/>
</dbReference>
<dbReference type="Pfam" id="PF11097">
    <property type="entry name" value="DUF2883"/>
    <property type="match status" value="1"/>
</dbReference>
<organism>
    <name type="scientific">Enterobacteria phage T4</name>
    <name type="common">Bacteriophage T4</name>
    <dbReference type="NCBI Taxonomy" id="10665"/>
    <lineage>
        <taxon>Viruses</taxon>
        <taxon>Duplodnaviria</taxon>
        <taxon>Heunggongvirae</taxon>
        <taxon>Uroviricota</taxon>
        <taxon>Caudoviricetes</taxon>
        <taxon>Straboviridae</taxon>
        <taxon>Tevenvirinae</taxon>
        <taxon>Tequatrovirus</taxon>
    </lineage>
</organism>
<reference key="1">
    <citation type="journal article" date="1992" name="DNA Seq.">
        <title>The nucleotide sequence between genes 31 and 30 of bacteriophage T4.</title>
        <authorList>
            <person name="Nivinskas R."/>
            <person name="Zajanckauskaite A."/>
            <person name="Raudonikiene A."/>
            <person name="Viteniene I."/>
        </authorList>
    </citation>
    <scope>NUCLEOTIDE SEQUENCE [GENOMIC DNA]</scope>
</reference>
<reference key="2">
    <citation type="journal article" date="2003" name="Microbiol. Mol. Biol. Rev.">
        <title>Bacteriophage T4 genome.</title>
        <authorList>
            <person name="Miller E.S."/>
            <person name="Kutter E."/>
            <person name="Mosig G."/>
            <person name="Arisaka F."/>
            <person name="Kunisawa T."/>
            <person name="Ruger W."/>
        </authorList>
    </citation>
    <scope>NUCLEOTIDE SEQUENCE [LARGE SCALE GENOMIC DNA]</scope>
</reference>
<proteinExistence type="predicted"/>